<gene>
    <name evidence="1" type="primary">rplU</name>
    <name type="ordered locus">Bcenmc03_0551</name>
</gene>
<evidence type="ECO:0000255" key="1">
    <source>
        <dbReference type="HAMAP-Rule" id="MF_01363"/>
    </source>
</evidence>
<evidence type="ECO:0000305" key="2"/>
<keyword id="KW-0687">Ribonucleoprotein</keyword>
<keyword id="KW-0689">Ribosomal protein</keyword>
<keyword id="KW-0694">RNA-binding</keyword>
<keyword id="KW-0699">rRNA-binding</keyword>
<reference key="1">
    <citation type="submission" date="2008-02" db="EMBL/GenBank/DDBJ databases">
        <title>Complete sequence of chromosome 1 of Burkholderia cenocepacia MC0-3.</title>
        <authorList>
            <person name="Copeland A."/>
            <person name="Lucas S."/>
            <person name="Lapidus A."/>
            <person name="Barry K."/>
            <person name="Bruce D."/>
            <person name="Goodwin L."/>
            <person name="Glavina del Rio T."/>
            <person name="Dalin E."/>
            <person name="Tice H."/>
            <person name="Pitluck S."/>
            <person name="Chain P."/>
            <person name="Malfatti S."/>
            <person name="Shin M."/>
            <person name="Vergez L."/>
            <person name="Schmutz J."/>
            <person name="Larimer F."/>
            <person name="Land M."/>
            <person name="Hauser L."/>
            <person name="Kyrpides N."/>
            <person name="Mikhailova N."/>
            <person name="Tiedje J."/>
            <person name="Richardson P."/>
        </authorList>
    </citation>
    <scope>NUCLEOTIDE SEQUENCE [LARGE SCALE GENOMIC DNA]</scope>
    <source>
        <strain>MC0-3</strain>
    </source>
</reference>
<organism>
    <name type="scientific">Burkholderia orbicola (strain MC0-3)</name>
    <dbReference type="NCBI Taxonomy" id="406425"/>
    <lineage>
        <taxon>Bacteria</taxon>
        <taxon>Pseudomonadati</taxon>
        <taxon>Pseudomonadota</taxon>
        <taxon>Betaproteobacteria</taxon>
        <taxon>Burkholderiales</taxon>
        <taxon>Burkholderiaceae</taxon>
        <taxon>Burkholderia</taxon>
        <taxon>Burkholderia cepacia complex</taxon>
        <taxon>Burkholderia orbicola</taxon>
    </lineage>
</organism>
<dbReference type="EMBL" id="CP000958">
    <property type="protein sequence ID" value="ACA89729.1"/>
    <property type="molecule type" value="Genomic_DNA"/>
</dbReference>
<dbReference type="RefSeq" id="WP_006025184.1">
    <property type="nucleotide sequence ID" value="NC_010508.1"/>
</dbReference>
<dbReference type="SMR" id="B1JV99"/>
<dbReference type="GeneID" id="98106574"/>
<dbReference type="KEGG" id="bcm:Bcenmc03_0551"/>
<dbReference type="HOGENOM" id="CLU_061463_3_1_4"/>
<dbReference type="Proteomes" id="UP000002169">
    <property type="component" value="Chromosome 1"/>
</dbReference>
<dbReference type="GO" id="GO:0005737">
    <property type="term" value="C:cytoplasm"/>
    <property type="evidence" value="ECO:0007669"/>
    <property type="project" value="UniProtKB-ARBA"/>
</dbReference>
<dbReference type="GO" id="GO:1990904">
    <property type="term" value="C:ribonucleoprotein complex"/>
    <property type="evidence" value="ECO:0007669"/>
    <property type="project" value="UniProtKB-KW"/>
</dbReference>
<dbReference type="GO" id="GO:0005840">
    <property type="term" value="C:ribosome"/>
    <property type="evidence" value="ECO:0007669"/>
    <property type="project" value="UniProtKB-KW"/>
</dbReference>
<dbReference type="GO" id="GO:0019843">
    <property type="term" value="F:rRNA binding"/>
    <property type="evidence" value="ECO:0007669"/>
    <property type="project" value="UniProtKB-UniRule"/>
</dbReference>
<dbReference type="GO" id="GO:0003735">
    <property type="term" value="F:structural constituent of ribosome"/>
    <property type="evidence" value="ECO:0007669"/>
    <property type="project" value="InterPro"/>
</dbReference>
<dbReference type="GO" id="GO:0006412">
    <property type="term" value="P:translation"/>
    <property type="evidence" value="ECO:0007669"/>
    <property type="project" value="UniProtKB-UniRule"/>
</dbReference>
<dbReference type="HAMAP" id="MF_01363">
    <property type="entry name" value="Ribosomal_bL21"/>
    <property type="match status" value="1"/>
</dbReference>
<dbReference type="InterPro" id="IPR028909">
    <property type="entry name" value="bL21-like"/>
</dbReference>
<dbReference type="InterPro" id="IPR036164">
    <property type="entry name" value="bL21-like_sf"/>
</dbReference>
<dbReference type="InterPro" id="IPR001787">
    <property type="entry name" value="Ribosomal_bL21"/>
</dbReference>
<dbReference type="InterPro" id="IPR018258">
    <property type="entry name" value="Ribosomal_bL21_CS"/>
</dbReference>
<dbReference type="NCBIfam" id="TIGR00061">
    <property type="entry name" value="L21"/>
    <property type="match status" value="1"/>
</dbReference>
<dbReference type="PANTHER" id="PTHR21349">
    <property type="entry name" value="50S RIBOSOMAL PROTEIN L21"/>
    <property type="match status" value="1"/>
</dbReference>
<dbReference type="PANTHER" id="PTHR21349:SF0">
    <property type="entry name" value="LARGE RIBOSOMAL SUBUNIT PROTEIN BL21M"/>
    <property type="match status" value="1"/>
</dbReference>
<dbReference type="Pfam" id="PF00829">
    <property type="entry name" value="Ribosomal_L21p"/>
    <property type="match status" value="1"/>
</dbReference>
<dbReference type="SUPFAM" id="SSF141091">
    <property type="entry name" value="L21p-like"/>
    <property type="match status" value="1"/>
</dbReference>
<dbReference type="PROSITE" id="PS01169">
    <property type="entry name" value="RIBOSOMAL_L21"/>
    <property type="match status" value="1"/>
</dbReference>
<comment type="function">
    <text evidence="1">This protein binds to 23S rRNA in the presence of protein L20.</text>
</comment>
<comment type="subunit">
    <text evidence="1">Part of the 50S ribosomal subunit. Contacts protein L20.</text>
</comment>
<comment type="similarity">
    <text evidence="1">Belongs to the bacterial ribosomal protein bL21 family.</text>
</comment>
<feature type="chain" id="PRO_1000143764" description="Large ribosomal subunit protein bL21">
    <location>
        <begin position="1"/>
        <end position="103"/>
    </location>
</feature>
<sequence>MYAVIKTGGKQYKVAVGEKLKVEQIPADIDAEITLDQVLAVGEGESIKFGTPLVSGASVKATVVSHGRHAKVTIFKMRRRKHYQKHGGHRQNYTELRIDAINA</sequence>
<name>RL21_BURO0</name>
<proteinExistence type="inferred from homology"/>
<protein>
    <recommendedName>
        <fullName evidence="1">Large ribosomal subunit protein bL21</fullName>
    </recommendedName>
    <alternativeName>
        <fullName evidence="2">50S ribosomal protein L21</fullName>
    </alternativeName>
</protein>
<accession>B1JV99</accession>